<reference key="1">
    <citation type="submission" date="2007-11" db="EMBL/GenBank/DDBJ databases">
        <title>Complete sequence of chromosome of Shewanella baltica OS195.</title>
        <authorList>
            <consortium name="US DOE Joint Genome Institute"/>
            <person name="Copeland A."/>
            <person name="Lucas S."/>
            <person name="Lapidus A."/>
            <person name="Barry K."/>
            <person name="Glavina del Rio T."/>
            <person name="Dalin E."/>
            <person name="Tice H."/>
            <person name="Pitluck S."/>
            <person name="Chain P."/>
            <person name="Malfatti S."/>
            <person name="Shin M."/>
            <person name="Vergez L."/>
            <person name="Schmutz J."/>
            <person name="Larimer F."/>
            <person name="Land M."/>
            <person name="Hauser L."/>
            <person name="Kyrpides N."/>
            <person name="Kim E."/>
            <person name="Brettar I."/>
            <person name="Rodrigues J."/>
            <person name="Konstantinidis K."/>
            <person name="Klappenbach J."/>
            <person name="Hofle M."/>
            <person name="Tiedje J."/>
            <person name="Richardson P."/>
        </authorList>
    </citation>
    <scope>NUCLEOTIDE SEQUENCE [LARGE SCALE GENOMIC DNA]</scope>
    <source>
        <strain>OS195</strain>
    </source>
</reference>
<feature type="chain" id="PRO_1000077705" description="Diaminopimelate epimerase">
    <location>
        <begin position="1"/>
        <end position="275"/>
    </location>
</feature>
<feature type="active site" description="Proton donor" evidence="1">
    <location>
        <position position="74"/>
    </location>
</feature>
<feature type="active site" description="Proton acceptor" evidence="1">
    <location>
        <position position="218"/>
    </location>
</feature>
<feature type="binding site" evidence="1">
    <location>
        <position position="12"/>
    </location>
    <ligand>
        <name>substrate</name>
    </ligand>
</feature>
<feature type="binding site" evidence="1">
    <location>
        <position position="45"/>
    </location>
    <ligand>
        <name>substrate</name>
    </ligand>
</feature>
<feature type="binding site" evidence="1">
    <location>
        <position position="65"/>
    </location>
    <ligand>
        <name>substrate</name>
    </ligand>
</feature>
<feature type="binding site" evidence="1">
    <location>
        <begin position="75"/>
        <end position="76"/>
    </location>
    <ligand>
        <name>substrate</name>
    </ligand>
</feature>
<feature type="binding site" evidence="1">
    <location>
        <position position="158"/>
    </location>
    <ligand>
        <name>substrate</name>
    </ligand>
</feature>
<feature type="binding site" evidence="1">
    <location>
        <position position="191"/>
    </location>
    <ligand>
        <name>substrate</name>
    </ligand>
</feature>
<feature type="binding site" evidence="1">
    <location>
        <begin position="209"/>
        <end position="210"/>
    </location>
    <ligand>
        <name>substrate</name>
    </ligand>
</feature>
<feature type="binding site" evidence="1">
    <location>
        <begin position="219"/>
        <end position="220"/>
    </location>
    <ligand>
        <name>substrate</name>
    </ligand>
</feature>
<feature type="site" description="Could be important to modulate the pK values of the two catalytic cysteine residues" evidence="1">
    <location>
        <position position="160"/>
    </location>
</feature>
<feature type="site" description="Could be important to modulate the pK values of the two catalytic cysteine residues" evidence="1">
    <location>
        <position position="209"/>
    </location>
</feature>
<feature type="site" description="Important for dimerization" evidence="1">
    <location>
        <position position="269"/>
    </location>
</feature>
<sequence length="275" mass="30105">MIQFTKMHGLGNDFMVVDGVTQNVFFSPEQIRRLADRNFGIGFDQLLLVEPPYDPDLDFHYRIFNADGTEVEQCGNGARCFARFVRNKGLTNKSKIRVSTSSGKMTLRLERDGTVTVNMGVPILEPSQIPFKAKKPEKTYLLQTPMQTFLCGAASMGNPHCVLDVEDVASASVAEIGAMLTKHERFPRGVNVGFMQVVDSGHIKLRVYERGAAETLACGTGACAAVVVGQVQGKLGQQVRVDLPGGTLTINWEGEGKPLWMTGPAQHVYDGQIQL</sequence>
<name>DAPF_SHEB9</name>
<proteinExistence type="inferred from homology"/>
<comment type="function">
    <text evidence="1">Catalyzes the stereoinversion of LL-2,6-diaminopimelate (L,L-DAP) to meso-diaminopimelate (meso-DAP), a precursor of L-lysine and an essential component of the bacterial peptidoglycan.</text>
</comment>
<comment type="catalytic activity">
    <reaction evidence="1">
        <text>(2S,6S)-2,6-diaminopimelate = meso-2,6-diaminopimelate</text>
        <dbReference type="Rhea" id="RHEA:15393"/>
        <dbReference type="ChEBI" id="CHEBI:57609"/>
        <dbReference type="ChEBI" id="CHEBI:57791"/>
        <dbReference type="EC" id="5.1.1.7"/>
    </reaction>
</comment>
<comment type="pathway">
    <text evidence="1">Amino-acid biosynthesis; L-lysine biosynthesis via DAP pathway; DL-2,6-diaminopimelate from LL-2,6-diaminopimelate: step 1/1.</text>
</comment>
<comment type="subunit">
    <text evidence="1">Homodimer.</text>
</comment>
<comment type="subcellular location">
    <subcellularLocation>
        <location evidence="1">Cytoplasm</location>
    </subcellularLocation>
</comment>
<comment type="similarity">
    <text evidence="1">Belongs to the diaminopimelate epimerase family.</text>
</comment>
<evidence type="ECO:0000255" key="1">
    <source>
        <dbReference type="HAMAP-Rule" id="MF_00197"/>
    </source>
</evidence>
<organism>
    <name type="scientific">Shewanella baltica (strain OS195)</name>
    <dbReference type="NCBI Taxonomy" id="399599"/>
    <lineage>
        <taxon>Bacteria</taxon>
        <taxon>Pseudomonadati</taxon>
        <taxon>Pseudomonadota</taxon>
        <taxon>Gammaproteobacteria</taxon>
        <taxon>Alteromonadales</taxon>
        <taxon>Shewanellaceae</taxon>
        <taxon>Shewanella</taxon>
    </lineage>
</organism>
<gene>
    <name evidence="1" type="primary">dapF</name>
    <name type="ordered locus">Sbal195_4089</name>
</gene>
<protein>
    <recommendedName>
        <fullName evidence="1">Diaminopimelate epimerase</fullName>
        <shortName evidence="1">DAP epimerase</shortName>
        <ecNumber evidence="1">5.1.1.7</ecNumber>
    </recommendedName>
    <alternativeName>
        <fullName evidence="1">PLP-independent amino acid racemase</fullName>
    </alternativeName>
</protein>
<dbReference type="EC" id="5.1.1.7" evidence="1"/>
<dbReference type="EMBL" id="CP000891">
    <property type="protein sequence ID" value="ABX51249.1"/>
    <property type="molecule type" value="Genomic_DNA"/>
</dbReference>
<dbReference type="RefSeq" id="WP_006083422.1">
    <property type="nucleotide sequence ID" value="NC_009997.1"/>
</dbReference>
<dbReference type="SMR" id="A9L5F5"/>
<dbReference type="GeneID" id="11775013"/>
<dbReference type="KEGG" id="sbn:Sbal195_4089"/>
<dbReference type="HOGENOM" id="CLU_053306_1_1_6"/>
<dbReference type="UniPathway" id="UPA00034">
    <property type="reaction ID" value="UER00025"/>
</dbReference>
<dbReference type="Proteomes" id="UP000000770">
    <property type="component" value="Chromosome"/>
</dbReference>
<dbReference type="GO" id="GO:0005829">
    <property type="term" value="C:cytosol"/>
    <property type="evidence" value="ECO:0007669"/>
    <property type="project" value="TreeGrafter"/>
</dbReference>
<dbReference type="GO" id="GO:0008837">
    <property type="term" value="F:diaminopimelate epimerase activity"/>
    <property type="evidence" value="ECO:0007669"/>
    <property type="project" value="UniProtKB-UniRule"/>
</dbReference>
<dbReference type="GO" id="GO:0009089">
    <property type="term" value="P:lysine biosynthetic process via diaminopimelate"/>
    <property type="evidence" value="ECO:0007669"/>
    <property type="project" value="UniProtKB-UniRule"/>
</dbReference>
<dbReference type="FunFam" id="3.10.310.10:FF:000001">
    <property type="entry name" value="Diaminopimelate epimerase"/>
    <property type="match status" value="1"/>
</dbReference>
<dbReference type="FunFam" id="3.10.310.10:FF:000002">
    <property type="entry name" value="Diaminopimelate epimerase"/>
    <property type="match status" value="1"/>
</dbReference>
<dbReference type="Gene3D" id="3.10.310.10">
    <property type="entry name" value="Diaminopimelate Epimerase, Chain A, domain 1"/>
    <property type="match status" value="2"/>
</dbReference>
<dbReference type="HAMAP" id="MF_00197">
    <property type="entry name" value="DAP_epimerase"/>
    <property type="match status" value="1"/>
</dbReference>
<dbReference type="InterPro" id="IPR018510">
    <property type="entry name" value="DAP_epimerase_AS"/>
</dbReference>
<dbReference type="InterPro" id="IPR001653">
    <property type="entry name" value="DAP_epimerase_DapF"/>
</dbReference>
<dbReference type="NCBIfam" id="TIGR00652">
    <property type="entry name" value="DapF"/>
    <property type="match status" value="1"/>
</dbReference>
<dbReference type="PANTHER" id="PTHR31689:SF0">
    <property type="entry name" value="DIAMINOPIMELATE EPIMERASE"/>
    <property type="match status" value="1"/>
</dbReference>
<dbReference type="PANTHER" id="PTHR31689">
    <property type="entry name" value="DIAMINOPIMELATE EPIMERASE, CHLOROPLASTIC"/>
    <property type="match status" value="1"/>
</dbReference>
<dbReference type="Pfam" id="PF01678">
    <property type="entry name" value="DAP_epimerase"/>
    <property type="match status" value="2"/>
</dbReference>
<dbReference type="SUPFAM" id="SSF54506">
    <property type="entry name" value="Diaminopimelate epimerase-like"/>
    <property type="match status" value="1"/>
</dbReference>
<dbReference type="PROSITE" id="PS01326">
    <property type="entry name" value="DAP_EPIMERASE"/>
    <property type="match status" value="1"/>
</dbReference>
<keyword id="KW-0028">Amino-acid biosynthesis</keyword>
<keyword id="KW-0963">Cytoplasm</keyword>
<keyword id="KW-0413">Isomerase</keyword>
<keyword id="KW-0457">Lysine biosynthesis</keyword>
<accession>A9L5F5</accession>